<keyword id="KW-0067">ATP-binding</keyword>
<keyword id="KW-1003">Cell membrane</keyword>
<keyword id="KW-0472">Membrane</keyword>
<keyword id="KW-0547">Nucleotide-binding</keyword>
<keyword id="KW-1185">Reference proteome</keyword>
<keyword id="KW-0812">Transmembrane</keyword>
<keyword id="KW-1133">Transmembrane helix</keyword>
<keyword id="KW-0813">Transport</keyword>
<sequence>MDNTIGPRVDPSIRAFDFTALFEECFLDILPWSLFLLMLLVRLKFLLNRPKIIRVDRLCLIKEALWTLYAVVKLAQLILWASIAAFTTAGTVPAAALAFVGCMGGSVLSYFEHCRSRRPSSLLGILTLLILLCDVTRVRTMWLMDQPRAISILTTAALPINILLLVFESLTKTAVANEKEASRSKEEIVGILNRSVFWWLNSLFILGRKHVLHMGNLPRVDSKVLTSYAAPKVYERWESKPQSLMLQSLQAYPMTLLRGGLCRLFTALFVTSQPLLLKRTIRWFSEPSTPVSDAEGYGLIGAYLVVYGGRAVFTALAQHQNYRLITMIRASLVSLIYDRTLTLDLVEAKESAALTLMSTDVERIGQGLQFVHEIWATPAEFGVAIFLLQREVALGSLAPVIIIIVAIVGTVLLSMKIDPHQKEWIGAIERRIGSTTDMLRNMRGVKMSGFEDALTSILQAMRVEEVNISRATKLLFIGCQVFSTATATISPVLGFTIYVLMQRAQGKPGLASSSAFTSLSLFSILSSSVYIFLTSVPAIFSGISCFARVENYLVSENITGPTDAEGQDSEASSISAEKISIIAPKIAPSDYLLVIRDGSVRWKGQEKAVLSQINLCIEQGSFCVISGSVGSGKSSLLYAILGEASLKADTFHISTTSIAYCQQSPWLPDISVKECVLNGRDWDEDLYKRVIHACALSEDLAQLSAGDHTKVGYEGGTLSGGQRQRVALARALYSRRRLLLLDDTFSALDPKTEKSVSGNLFSSSGLLRELGTTVICTTGKPGNSNKYADYTLDLNKEGEAQLRNTQKDMQDDEIEASTYSREQNGPKKQEEDANHESNQSPETSQEHELAQESVPTFSSMIFYLRSTGMGFFALSFSLSLVYSFWQNFPTIWVNLWTQHDAKHPYGDLAKYIGVYILCAVLALVTHTVVTWFVNMACNGIDGAAVRAGPTRDTPENSGTASITGRGYVVFTNKHRAPMSYFESVDIGTITNHFSQDMEKVDLEIPLTGVQALFAFTSALVQLVMLSIGTKWMAITFPFIIAILAIIQRQYLKTSRQLRLLDLEAKSPLYSHFTETLSGLATIRAFGTHKQCQSINTERLDCSQGPFYLLYCAQRWLTLVLNLVIGAMAILMMGVTIKLRGSTGAGYIGLAFVNLTTFSQSIQSLLTWWTMMEASIGAVHRVQQFEKETPQEDVLGQVTSPPHSWPKAGLIELKELSASYLSSVSPVLRNVTFTVQPGQKVGICGRTGSGKTSLILCLQRMIKINSGSILIDGLNTSHVPAKTLRERLICIPQDALIFNGTVRLNLDPQSSFTDKQLQDNLRRVELWDLISSKGGLDATMQDGLLSHGQLQLFCLSRVLQKKSPIVILDEVSSSADEESQRLISKIIREDFKDRTVISIAHRLQQIADFDIILVFSQGQLVEQGSPEDLLGRDVSLFQDLFSQQDK</sequence>
<dbReference type="EMBL" id="HG970332">
    <property type="protein sequence ID" value="CEF71875.1"/>
    <property type="molecule type" value="Genomic_DNA"/>
</dbReference>
<dbReference type="RefSeq" id="XP_011315635.1">
    <property type="nucleotide sequence ID" value="XM_011317333.1"/>
</dbReference>
<dbReference type="SMR" id="I1R9B3"/>
<dbReference type="STRING" id="229533.I1R9B3"/>
<dbReference type="GeneID" id="23547562"/>
<dbReference type="KEGG" id="fgr:FGSG_00046"/>
<dbReference type="VEuPathDB" id="FungiDB:FGRAMPH1_01G00151"/>
<dbReference type="eggNOG" id="KOG0054">
    <property type="taxonomic scope" value="Eukaryota"/>
</dbReference>
<dbReference type="HOGENOM" id="CLU_000604_27_5_1"/>
<dbReference type="InParanoid" id="I1R9B3"/>
<dbReference type="OrthoDB" id="96680at110618"/>
<dbReference type="Proteomes" id="UP000070720">
    <property type="component" value="Chromosome 1"/>
</dbReference>
<dbReference type="GO" id="GO:0005886">
    <property type="term" value="C:plasma membrane"/>
    <property type="evidence" value="ECO:0007669"/>
    <property type="project" value="UniProtKB-SubCell"/>
</dbReference>
<dbReference type="GO" id="GO:0140359">
    <property type="term" value="F:ABC-type transporter activity"/>
    <property type="evidence" value="ECO:0007669"/>
    <property type="project" value="InterPro"/>
</dbReference>
<dbReference type="GO" id="GO:0005524">
    <property type="term" value="F:ATP binding"/>
    <property type="evidence" value="ECO:0007669"/>
    <property type="project" value="UniProtKB-KW"/>
</dbReference>
<dbReference type="GO" id="GO:0016887">
    <property type="term" value="F:ATP hydrolysis activity"/>
    <property type="evidence" value="ECO:0007669"/>
    <property type="project" value="InterPro"/>
</dbReference>
<dbReference type="CDD" id="cd18580">
    <property type="entry name" value="ABC_6TM_ABCC_D2"/>
    <property type="match status" value="1"/>
</dbReference>
<dbReference type="CDD" id="cd03244">
    <property type="entry name" value="ABCC_MRP_domain2"/>
    <property type="match status" value="1"/>
</dbReference>
<dbReference type="FunFam" id="1.20.1560.10:FF:000055">
    <property type="entry name" value="ABC multidrug transporter (Eurofung)"/>
    <property type="match status" value="1"/>
</dbReference>
<dbReference type="FunFam" id="1.20.1560.10:FF:000066">
    <property type="entry name" value="ABC multidrug transporter (Eurofung)"/>
    <property type="match status" value="1"/>
</dbReference>
<dbReference type="FunFam" id="3.40.50.300:FF:000838">
    <property type="entry name" value="ABC multidrug transporter (Eurofung)"/>
    <property type="match status" value="1"/>
</dbReference>
<dbReference type="Gene3D" id="1.20.1560.10">
    <property type="entry name" value="ABC transporter type 1, transmembrane domain"/>
    <property type="match status" value="2"/>
</dbReference>
<dbReference type="Gene3D" id="3.40.50.300">
    <property type="entry name" value="P-loop containing nucleotide triphosphate hydrolases"/>
    <property type="match status" value="2"/>
</dbReference>
<dbReference type="InterPro" id="IPR003593">
    <property type="entry name" value="AAA+_ATPase"/>
</dbReference>
<dbReference type="InterPro" id="IPR011527">
    <property type="entry name" value="ABC1_TM_dom"/>
</dbReference>
<dbReference type="InterPro" id="IPR036640">
    <property type="entry name" value="ABC1_TM_sf"/>
</dbReference>
<dbReference type="InterPro" id="IPR003439">
    <property type="entry name" value="ABC_transporter-like_ATP-bd"/>
</dbReference>
<dbReference type="InterPro" id="IPR017871">
    <property type="entry name" value="ABC_transporter-like_CS"/>
</dbReference>
<dbReference type="InterPro" id="IPR050173">
    <property type="entry name" value="ABC_transporter_C-like"/>
</dbReference>
<dbReference type="InterPro" id="IPR044726">
    <property type="entry name" value="ABCC_6TM_D2"/>
</dbReference>
<dbReference type="InterPro" id="IPR027417">
    <property type="entry name" value="P-loop_NTPase"/>
</dbReference>
<dbReference type="PANTHER" id="PTHR24223:SF399">
    <property type="entry name" value="ABC TRANSPORTER ATNG"/>
    <property type="match status" value="1"/>
</dbReference>
<dbReference type="PANTHER" id="PTHR24223">
    <property type="entry name" value="ATP-BINDING CASSETTE SUB-FAMILY C"/>
    <property type="match status" value="1"/>
</dbReference>
<dbReference type="Pfam" id="PF00664">
    <property type="entry name" value="ABC_membrane"/>
    <property type="match status" value="2"/>
</dbReference>
<dbReference type="Pfam" id="PF00005">
    <property type="entry name" value="ABC_tran"/>
    <property type="match status" value="2"/>
</dbReference>
<dbReference type="SMART" id="SM00382">
    <property type="entry name" value="AAA"/>
    <property type="match status" value="2"/>
</dbReference>
<dbReference type="SUPFAM" id="SSF90123">
    <property type="entry name" value="ABC transporter transmembrane region"/>
    <property type="match status" value="2"/>
</dbReference>
<dbReference type="SUPFAM" id="SSF52540">
    <property type="entry name" value="P-loop containing nucleoside triphosphate hydrolases"/>
    <property type="match status" value="2"/>
</dbReference>
<dbReference type="PROSITE" id="PS50929">
    <property type="entry name" value="ABC_TM1F"/>
    <property type="match status" value="2"/>
</dbReference>
<dbReference type="PROSITE" id="PS00211">
    <property type="entry name" value="ABC_TRANSPORTER_1"/>
    <property type="match status" value="2"/>
</dbReference>
<dbReference type="PROSITE" id="PS50893">
    <property type="entry name" value="ABC_TRANSPORTER_2"/>
    <property type="match status" value="2"/>
</dbReference>
<evidence type="ECO:0000255" key="1"/>
<evidence type="ECO:0000255" key="2">
    <source>
        <dbReference type="PROSITE-ProRule" id="PRU00434"/>
    </source>
</evidence>
<evidence type="ECO:0000255" key="3">
    <source>
        <dbReference type="PROSITE-ProRule" id="PRU00441"/>
    </source>
</evidence>
<evidence type="ECO:0000256" key="4">
    <source>
        <dbReference type="SAM" id="MobiDB-lite"/>
    </source>
</evidence>
<evidence type="ECO:0000269" key="5">
    <source>
    </source>
</evidence>
<evidence type="ECO:0000303" key="6">
    <source>
    </source>
</evidence>
<evidence type="ECO:0000305" key="7"/>
<evidence type="ECO:0000305" key="8">
    <source>
    </source>
</evidence>
<name>GRA13_GIBZE</name>
<reference key="1">
    <citation type="journal article" date="2007" name="Science">
        <title>The Fusarium graminearum genome reveals a link between localized polymorphism and pathogen specialization.</title>
        <authorList>
            <person name="Cuomo C.A."/>
            <person name="Gueldener U."/>
            <person name="Xu J.-R."/>
            <person name="Trail F."/>
            <person name="Turgeon B.G."/>
            <person name="Di Pietro A."/>
            <person name="Walton J.D."/>
            <person name="Ma L.-J."/>
            <person name="Baker S.E."/>
            <person name="Rep M."/>
            <person name="Adam G."/>
            <person name="Antoniw J."/>
            <person name="Baldwin T."/>
            <person name="Calvo S.E."/>
            <person name="Chang Y.-L."/>
            <person name="DeCaprio D."/>
            <person name="Gale L.R."/>
            <person name="Gnerre S."/>
            <person name="Goswami R.S."/>
            <person name="Hammond-Kosack K."/>
            <person name="Harris L.J."/>
            <person name="Hilburn K."/>
            <person name="Kennell J.C."/>
            <person name="Kroken S."/>
            <person name="Magnuson J.K."/>
            <person name="Mannhaupt G."/>
            <person name="Mauceli E.W."/>
            <person name="Mewes H.-W."/>
            <person name="Mitterbauer R."/>
            <person name="Muehlbauer G."/>
            <person name="Muensterkoetter M."/>
            <person name="Nelson D."/>
            <person name="O'Donnell K."/>
            <person name="Ouellet T."/>
            <person name="Qi W."/>
            <person name="Quesneville H."/>
            <person name="Roncero M.I.G."/>
            <person name="Seong K.-Y."/>
            <person name="Tetko I.V."/>
            <person name="Urban M."/>
            <person name="Waalwijk C."/>
            <person name="Ward T.J."/>
            <person name="Yao J."/>
            <person name="Birren B.W."/>
            <person name="Kistler H.C."/>
        </authorList>
    </citation>
    <scope>NUCLEOTIDE SEQUENCE [LARGE SCALE GENOMIC DNA]</scope>
    <source>
        <strain>ATCC MYA-4620 / CBS 123657 / FGSC 9075 / NRRL 31084 / PH-1</strain>
    </source>
</reference>
<reference key="2">
    <citation type="journal article" date="2010" name="Nature">
        <title>Comparative genomics reveals mobile pathogenicity chromosomes in Fusarium.</title>
        <authorList>
            <person name="Ma L.-J."/>
            <person name="van der Does H.C."/>
            <person name="Borkovich K.A."/>
            <person name="Coleman J.J."/>
            <person name="Daboussi M.-J."/>
            <person name="Di Pietro A."/>
            <person name="Dufresne M."/>
            <person name="Freitag M."/>
            <person name="Grabherr M."/>
            <person name="Henrissat B."/>
            <person name="Houterman P.M."/>
            <person name="Kang S."/>
            <person name="Shim W.-B."/>
            <person name="Woloshuk C."/>
            <person name="Xie X."/>
            <person name="Xu J.-R."/>
            <person name="Antoniw J."/>
            <person name="Baker S.E."/>
            <person name="Bluhm B.H."/>
            <person name="Breakspear A."/>
            <person name="Brown D.W."/>
            <person name="Butchko R.A.E."/>
            <person name="Chapman S."/>
            <person name="Coulson R."/>
            <person name="Coutinho P.M."/>
            <person name="Danchin E.G.J."/>
            <person name="Diener A."/>
            <person name="Gale L.R."/>
            <person name="Gardiner D.M."/>
            <person name="Goff S."/>
            <person name="Hammond-Kosack K.E."/>
            <person name="Hilburn K."/>
            <person name="Hua-Van A."/>
            <person name="Jonkers W."/>
            <person name="Kazan K."/>
            <person name="Kodira C.D."/>
            <person name="Koehrsen M."/>
            <person name="Kumar L."/>
            <person name="Lee Y.-H."/>
            <person name="Li L."/>
            <person name="Manners J.M."/>
            <person name="Miranda-Saavedra D."/>
            <person name="Mukherjee M."/>
            <person name="Park G."/>
            <person name="Park J."/>
            <person name="Park S.-Y."/>
            <person name="Proctor R.H."/>
            <person name="Regev A."/>
            <person name="Ruiz-Roldan M.C."/>
            <person name="Sain D."/>
            <person name="Sakthikumar S."/>
            <person name="Sykes S."/>
            <person name="Schwartz D.C."/>
            <person name="Turgeon B.G."/>
            <person name="Wapinski I."/>
            <person name="Yoder O."/>
            <person name="Young S."/>
            <person name="Zeng Q."/>
            <person name="Zhou S."/>
            <person name="Galagan J."/>
            <person name="Cuomo C.A."/>
            <person name="Kistler H.C."/>
            <person name="Rep M."/>
        </authorList>
    </citation>
    <scope>GENOME REANNOTATION</scope>
    <source>
        <strain>ATCC MYA-4620 / CBS 123657 / FGSC 9075 / NRRL 31084 / PH-1</strain>
    </source>
</reference>
<reference key="3">
    <citation type="journal article" date="2015" name="BMC Genomics">
        <title>The completed genome sequence of the pathogenic ascomycete fungus Fusarium graminearum.</title>
        <authorList>
            <person name="King R."/>
            <person name="Urban M."/>
            <person name="Hammond-Kosack M.C.U."/>
            <person name="Hassani-Pak K."/>
            <person name="Hammond-Kosack K.E."/>
        </authorList>
    </citation>
    <scope>NUCLEOTIDE SEQUENCE [LARGE SCALE GENOMIC DNA]</scope>
    <source>
        <strain>ATCC MYA-4620 / CBS 123657 / FGSC 9075 / NRRL 31084 / PH-1</strain>
    </source>
</reference>
<reference key="4">
    <citation type="journal article" date="2018" name="J. Am. Chem. Soc.">
        <title>Gramillin A and B: cyclic lipopeptides identified as the nonribosomal biosynthetic products of Fusarium graminearum.</title>
        <authorList>
            <person name="Bahadoor A."/>
            <person name="Brauer E.K."/>
            <person name="Bosnich W."/>
            <person name="Schneiderman D."/>
            <person name="Johnston A."/>
            <person name="Aubin Y."/>
            <person name="Blackwell B."/>
            <person name="Melanson J.E."/>
            <person name="Harris L.J."/>
        </authorList>
    </citation>
    <scope>FUNCTION</scope>
    <scope>PATHWAY</scope>
</reference>
<protein>
    <recommendedName>
        <fullName evidence="6">ABC-type transporter FGSG_00046</fullName>
    </recommendedName>
    <alternativeName>
        <fullName evidence="6">Gramillins biosynthetic cluster protein FGSG_00046</fullName>
    </alternativeName>
</protein>
<comment type="function">
    <text evidence="5 8">ABC-type transporter; part of the gene cluster that mediates the biosynthesis of gramillins A and B, bicyclic lipopeptides that induce cell death in maize leaves but not in wheat leaves (PubMed:30395461). May be involved in the secretion of gramillins (Probable).</text>
</comment>
<comment type="subcellular location">
    <subcellularLocation>
        <location evidence="7">Cell membrane</location>
        <topology evidence="1">Multi-pass membrane protein</topology>
    </subcellularLocation>
</comment>
<comment type="similarity">
    <text evidence="7">Belongs to the ABC transporter superfamily. ABCC family.</text>
</comment>
<organism>
    <name type="scientific">Gibberella zeae (strain ATCC MYA-4620 / CBS 123657 / FGSC 9075 / NRRL 31084 / PH-1)</name>
    <name type="common">Wheat head blight fungus</name>
    <name type="synonym">Fusarium graminearum</name>
    <dbReference type="NCBI Taxonomy" id="229533"/>
    <lineage>
        <taxon>Eukaryota</taxon>
        <taxon>Fungi</taxon>
        <taxon>Dikarya</taxon>
        <taxon>Ascomycota</taxon>
        <taxon>Pezizomycotina</taxon>
        <taxon>Sordariomycetes</taxon>
        <taxon>Hypocreomycetidae</taxon>
        <taxon>Hypocreales</taxon>
        <taxon>Nectriaceae</taxon>
        <taxon>Fusarium</taxon>
    </lineage>
</organism>
<accession>I1R9B3</accession>
<accession>A0A098D0D5</accession>
<gene>
    <name type="ORF">FGRAMPH1_01T00151</name>
    <name type="ORF">FGSG_00046</name>
</gene>
<feature type="chain" id="PRO_0000450579" description="ABC-type transporter FGSG_00046">
    <location>
        <begin position="1"/>
        <end position="1445"/>
    </location>
</feature>
<feature type="transmembrane region" description="Helical" evidence="1">
    <location>
        <begin position="21"/>
        <end position="41"/>
    </location>
</feature>
<feature type="transmembrane region" description="Helical" evidence="1">
    <location>
        <begin position="77"/>
        <end position="97"/>
    </location>
</feature>
<feature type="transmembrane region" description="Helical" evidence="1">
    <location>
        <begin position="119"/>
        <end position="138"/>
    </location>
</feature>
<feature type="transmembrane region" description="Helical" evidence="1">
    <location>
        <begin position="150"/>
        <end position="170"/>
    </location>
</feature>
<feature type="transmembrane region" description="Helical" evidence="1">
    <location>
        <begin position="187"/>
        <end position="207"/>
    </location>
</feature>
<feature type="transmembrane region" description="Helical" evidence="1 3">
    <location>
        <begin position="255"/>
        <end position="277"/>
    </location>
</feature>
<feature type="transmembrane region" description="Helical" evidence="1 3">
    <location>
        <begin position="297"/>
        <end position="317"/>
    </location>
</feature>
<feature type="transmembrane region" description="Helical" evidence="1 3">
    <location>
        <begin position="368"/>
        <end position="388"/>
    </location>
</feature>
<feature type="transmembrane region" description="Helical" evidence="1 3">
    <location>
        <begin position="392"/>
        <end position="412"/>
    </location>
</feature>
<feature type="transmembrane region" description="Helical" evidence="1 3">
    <location>
        <begin position="481"/>
        <end position="501"/>
    </location>
</feature>
<feature type="transmembrane region" description="Helical" evidence="1 3">
    <location>
        <begin position="520"/>
        <end position="540"/>
    </location>
</feature>
<feature type="transmembrane region" description="Helical" evidence="1">
    <location>
        <begin position="868"/>
        <end position="888"/>
    </location>
</feature>
<feature type="transmembrane region" description="Helical" evidence="1">
    <location>
        <begin position="912"/>
        <end position="932"/>
    </location>
</feature>
<feature type="transmembrane region" description="Helical" evidence="1 3">
    <location>
        <begin position="1004"/>
        <end position="1024"/>
    </location>
</feature>
<feature type="transmembrane region" description="Helical" evidence="1 3">
    <location>
        <begin position="1026"/>
        <end position="1046"/>
    </location>
</feature>
<feature type="transmembrane region" description="Helical" evidence="1 3">
    <location>
        <begin position="1116"/>
        <end position="1136"/>
    </location>
</feature>
<feature type="transmembrane region" description="Helical" evidence="1 3">
    <location>
        <begin position="1147"/>
        <end position="1167"/>
    </location>
</feature>
<feature type="domain" description="ABC transmembrane type-1 1" evidence="3">
    <location>
        <begin position="259"/>
        <end position="541"/>
    </location>
</feature>
<feature type="domain" description="ABC transporter 1" evidence="2">
    <location>
        <begin position="595"/>
        <end position="821"/>
    </location>
</feature>
<feature type="domain" description="ABC transmembrane type-1 2" evidence="3">
    <location>
        <begin position="974"/>
        <end position="1173"/>
    </location>
</feature>
<feature type="domain" description="ABC transporter 2" evidence="2">
    <location>
        <begin position="1210"/>
        <end position="1441"/>
    </location>
</feature>
<feature type="region of interest" description="Disordered" evidence="4">
    <location>
        <begin position="803"/>
        <end position="850"/>
    </location>
</feature>
<feature type="compositionally biased region" description="Basic and acidic residues" evidence="4">
    <location>
        <begin position="824"/>
        <end position="835"/>
    </location>
</feature>
<feature type="binding site" evidence="2">
    <location>
        <begin position="627"/>
        <end position="634"/>
    </location>
    <ligand>
        <name>ATP</name>
        <dbReference type="ChEBI" id="CHEBI:30616"/>
    </ligand>
</feature>
<feature type="binding site" evidence="2">
    <location>
        <begin position="1244"/>
        <end position="1251"/>
    </location>
    <ligand>
        <name>ATP</name>
        <dbReference type="ChEBI" id="CHEBI:30616"/>
    </ligand>
</feature>
<proteinExistence type="inferred from homology"/>